<sequence length="408" mass="46010">MQPYHTLSRVLPFPDANQKAWWDKLGPMLLKAMQSQGYDTEAQYAQLGMVYKCVLPYLGEFPTVENDATRWKSFLCPYGIPIEPSLNISQGILRYAFEPIGPDVGTEKDPQNMNIIQDCLKGLTQHDDRIDTTLHAEFSSRLLLTEEESRQFATTGQFNFGPGQGMHGFAVDLKGSRPMFKGYFCAGIKSVVTGIPTGKLMLDAVREVDTEGRITQPLDKLEEYSANGIGKLMLCFMSVDMVNPHDARIKMYGLQQEVSREGIVDLWTLGGRVNTPTNQEGLELLLELWDLLQIPAGPRSVAISHCSVGQPPEYMLPTLVNWTLLPGHSDPMPQVYLVPFGLPDSHISDCLVTFFERRGWTDLARDYKKNLASYFPDIDFTQSRHVQEAISFSFRKGKPYLSIYMSLF</sequence>
<dbReference type="EC" id="2.5.1.-" evidence="3 4"/>
<dbReference type="EMBL" id="KK088413">
    <property type="protein sequence ID" value="EYE98746.1"/>
    <property type="status" value="ALT_INIT"/>
    <property type="molecule type" value="Genomic_DNA"/>
</dbReference>
<dbReference type="SMR" id="A0A017SPL2"/>
<dbReference type="STRING" id="1388766.A0A017SPL2"/>
<dbReference type="HOGENOM" id="CLU_037431_0_0_1"/>
<dbReference type="OrthoDB" id="5392033at2759"/>
<dbReference type="Proteomes" id="UP000019804">
    <property type="component" value="Unassembled WGS sequence"/>
</dbReference>
<dbReference type="GO" id="GO:0004659">
    <property type="term" value="F:prenyltransferase activity"/>
    <property type="evidence" value="ECO:0007669"/>
    <property type="project" value="UniProtKB-KW"/>
</dbReference>
<dbReference type="GO" id="GO:0009820">
    <property type="term" value="P:alkaloid metabolic process"/>
    <property type="evidence" value="ECO:0007669"/>
    <property type="project" value="InterPro"/>
</dbReference>
<dbReference type="CDD" id="cd13929">
    <property type="entry name" value="PT-DMATS_CymD"/>
    <property type="match status" value="1"/>
</dbReference>
<dbReference type="InterPro" id="IPR033964">
    <property type="entry name" value="Aro_prenylTrfase"/>
</dbReference>
<dbReference type="InterPro" id="IPR017795">
    <property type="entry name" value="Aro_prenylTrfase_DMATS"/>
</dbReference>
<dbReference type="InterPro" id="IPR012148">
    <property type="entry name" value="DMATS-type_fun"/>
</dbReference>
<dbReference type="NCBIfam" id="TIGR03429">
    <property type="entry name" value="arom_pren_DMATS"/>
    <property type="match status" value="1"/>
</dbReference>
<dbReference type="PANTHER" id="PTHR40627">
    <property type="entry name" value="INDOLE PRENYLTRANSFERASE TDIB-RELATED"/>
    <property type="match status" value="1"/>
</dbReference>
<dbReference type="PANTHER" id="PTHR40627:SF3">
    <property type="entry name" value="PRENYLTRANSFERASE ASQH2-RELATED"/>
    <property type="match status" value="1"/>
</dbReference>
<dbReference type="Pfam" id="PF11991">
    <property type="entry name" value="Trp_DMAT"/>
    <property type="match status" value="1"/>
</dbReference>
<dbReference type="PIRSF" id="PIRSF000509">
    <property type="entry name" value="Trp_DMAT"/>
    <property type="match status" value="1"/>
</dbReference>
<dbReference type="SFLD" id="SFLDS00036">
    <property type="entry name" value="Aromatic_Prenyltransferase"/>
    <property type="match status" value="1"/>
</dbReference>
<dbReference type="SFLD" id="SFLDG01162">
    <property type="entry name" value="I"/>
    <property type="match status" value="1"/>
</dbReference>
<feature type="chain" id="PRO_0000457016" description="Echinulin prenyltransferase 2">
    <location>
        <begin position="1"/>
        <end position="408"/>
    </location>
</feature>
<feature type="binding site" evidence="2">
    <location>
        <position position="94"/>
    </location>
    <ligand>
        <name>dimethylallyl diphosphate</name>
        <dbReference type="ChEBI" id="CHEBI:57623"/>
    </ligand>
</feature>
<feature type="binding site" evidence="2">
    <location>
        <position position="181"/>
    </location>
    <ligand>
        <name>dimethylallyl diphosphate</name>
        <dbReference type="ChEBI" id="CHEBI:57623"/>
    </ligand>
</feature>
<feature type="binding site" evidence="2">
    <location>
        <position position="183"/>
    </location>
    <ligand>
        <name>dimethylallyl diphosphate</name>
        <dbReference type="ChEBI" id="CHEBI:57623"/>
    </ligand>
</feature>
<feature type="binding site" evidence="2">
    <location>
        <position position="248"/>
    </location>
    <ligand>
        <name>dimethylallyl diphosphate</name>
        <dbReference type="ChEBI" id="CHEBI:57623"/>
    </ligand>
</feature>
<feature type="binding site" evidence="2">
    <location>
        <position position="250"/>
    </location>
    <ligand>
        <name>dimethylallyl diphosphate</name>
        <dbReference type="ChEBI" id="CHEBI:57623"/>
    </ligand>
</feature>
<feature type="binding site" evidence="2">
    <location>
        <position position="252"/>
    </location>
    <ligand>
        <name>dimethylallyl diphosphate</name>
        <dbReference type="ChEBI" id="CHEBI:57623"/>
    </ligand>
</feature>
<feature type="binding site" evidence="2">
    <location>
        <position position="334"/>
    </location>
    <ligand>
        <name>dimethylallyl diphosphate</name>
        <dbReference type="ChEBI" id="CHEBI:57623"/>
    </ligand>
</feature>
<feature type="binding site" evidence="2">
    <location>
        <position position="336"/>
    </location>
    <ligand>
        <name>dimethylallyl diphosphate</name>
        <dbReference type="ChEBI" id="CHEBI:57623"/>
    </ligand>
</feature>
<feature type="binding site" evidence="2">
    <location>
        <position position="400"/>
    </location>
    <ligand>
        <name>dimethylallyl diphosphate</name>
        <dbReference type="ChEBI" id="CHEBI:57623"/>
    </ligand>
</feature>
<feature type="binding site" evidence="2">
    <location>
        <position position="404"/>
    </location>
    <ligand>
        <name>dimethylallyl diphosphate</name>
        <dbReference type="ChEBI" id="CHEBI:57623"/>
    </ligand>
</feature>
<reference key="1">
    <citation type="journal article" date="2014" name="Nat. Commun.">
        <title>Genomic adaptations of the halophilic Dead Sea filamentous fungus Eurotium rubrum.</title>
        <authorList>
            <person name="Kis-Papo T."/>
            <person name="Weig A.R."/>
            <person name="Riley R."/>
            <person name="Persoh D."/>
            <person name="Salamov A."/>
            <person name="Sun H."/>
            <person name="Lipzen A."/>
            <person name="Wasser S.P."/>
            <person name="Rambold G."/>
            <person name="Grigoriev I.V."/>
            <person name="Nevo E."/>
        </authorList>
    </citation>
    <scope>NUCLEOTIDE SEQUENCE [LARGE SCALE GENOMIC DNA]</scope>
    <source>
        <strain>CBS 135680</strain>
    </source>
</reference>
<reference key="2">
    <citation type="journal article" date="2017" name="Org. Lett.">
        <title>Two prenyltransferases govern a consecutive prenylation cascade in the biosynthesis of echinulin and neoechinulin.</title>
        <authorList>
            <person name="Wohlgemuth V."/>
            <person name="Kindinger F."/>
            <person name="Xie X."/>
            <person name="Wang B.G."/>
            <person name="Li S.M."/>
        </authorList>
    </citation>
    <scope>FUNCTION</scope>
    <scope>CATALYTIC ACTIVITY</scope>
    <scope>BIOPHYSICOCHEMICAL PROPERTIES</scope>
    <scope>PATHWAY</scope>
</reference>
<reference key="3">
    <citation type="journal article" date="2021" name="ACS Chem. Biol.">
        <title>Prenylation and dehydrogenation of a C2-reversely prenylated diketopiperazine as a branching point in the biosynthesis of echinulin family alkaloids in Aspergillus ruber.</title>
        <authorList>
            <person name="Nies J."/>
            <person name="Li S.M."/>
        </authorList>
    </citation>
    <scope>FUNCTION</scope>
    <scope>CATALYTIC ACTIVITY</scope>
    <scope>BIOPHYSICOCHEMICAL PROPERTIES</scope>
    <scope>PATHWAY</scope>
</reference>
<proteinExistence type="evidence at protein level"/>
<protein>
    <recommendedName>
        <fullName evidence="5">Echinulin prenyltransferase 2</fullName>
        <shortName evidence="5">EchPT2</shortName>
        <ecNumber evidence="3 4">2.5.1.-</ecNumber>
    </recommendedName>
    <alternativeName>
        <fullName evidence="5">Echinulin biosynthesis cluster protein echPT2</fullName>
    </alternativeName>
</protein>
<comment type="function">
    <text evidence="1 3 4">Prenyltransferase; part of the gene cluster that mediates the biosynthesis of echinulin family alkaloid (PubMed:29072465, PubMed:33381959). The pathway begins with the biosynthesis of the cyclic dipeptide cyclo-L-Trp-L-Ala (cyclo-TA) by the NRPS echPS via condensation of L-alanine and L-tryptophan (By similarity). The prenyltransferase echPT1 then catalyzes the first prenylation step, a reverse prenylation reaction at C2, to yield preechinulin (PubMed:29072465, PubMed:33381959). Preechinulin is the substrate of the cytochrome P450 monooxygenase echP450 that catalyzes the formation of the double bond between C10 and C11 to produce neoechulin A (PubMed:33381959). The unique prenyltransferase echPT2 functions as a competitive enzyme with echP450 for preechinulin metabolization and uses preechinulin for effective regiospecific prenylations. Preechinulin is prenylated by echPT2 at C5 or C7. C7-prenylation leads to accumulation of tardioxopiperazine B without further modification by echPT2. In contrast, the C5-prenylated tardioxopiperazine A can be prenylated again by echPT2, predominantly at C7 to form echinulin or less frequently at C4 to give variecolorin L. EchPT2 also accepts neoechilunin A to produce varlecolorin G (prenylation at C5) or isoechinulin A (prenylation at C7). EchPT2 further converts isoechinulin A into dehydroechinulin. Moreover, a yet unidentified enzyme can also convert neoechilunin A into neoechilunin B by introducing a double bond between positions C14 and C17 and thus provides a further substrate to echPT2 for C5 and C7 prenylation (PubMed:29072465, PubMed:33381959).</text>
</comment>
<comment type="catalytic activity">
    <reaction evidence="3 4">
        <text>preechinulin + dimethylallyl diphosphate = tardioxopiperazine B + diphosphate</text>
        <dbReference type="Rhea" id="RHEA:73775"/>
        <dbReference type="ChEBI" id="CHEBI:33019"/>
        <dbReference type="ChEBI" id="CHEBI:57623"/>
        <dbReference type="ChEBI" id="CHEBI:193003"/>
        <dbReference type="ChEBI" id="CHEBI:193006"/>
    </reaction>
    <physiologicalReaction direction="left-to-right" evidence="3 4">
        <dbReference type="Rhea" id="RHEA:73776"/>
    </physiologicalReaction>
</comment>
<comment type="catalytic activity">
    <reaction evidence="3 4">
        <text>preechinulin + dimethylallyl diphosphate = tardioxopiperazine A + diphosphate</text>
        <dbReference type="Rhea" id="RHEA:73779"/>
        <dbReference type="ChEBI" id="CHEBI:33019"/>
        <dbReference type="ChEBI" id="CHEBI:57623"/>
        <dbReference type="ChEBI" id="CHEBI:193003"/>
        <dbReference type="ChEBI" id="CHEBI:193007"/>
    </reaction>
    <physiologicalReaction direction="left-to-right" evidence="3 4">
        <dbReference type="Rhea" id="RHEA:73780"/>
    </physiologicalReaction>
</comment>
<comment type="catalytic activity">
    <reaction evidence="3 4">
        <text>tardioxopiperazine A + dimethylallyl diphosphate = echinulin + diphosphate</text>
        <dbReference type="Rhea" id="RHEA:73783"/>
        <dbReference type="ChEBI" id="CHEBI:33019"/>
        <dbReference type="ChEBI" id="CHEBI:57623"/>
        <dbReference type="ChEBI" id="CHEBI:68193"/>
        <dbReference type="ChEBI" id="CHEBI:193007"/>
    </reaction>
    <physiologicalReaction direction="left-to-right" evidence="3 4">
        <dbReference type="Rhea" id="RHEA:73784"/>
    </physiologicalReaction>
</comment>
<comment type="catalytic activity">
    <reaction evidence="3 4">
        <text>tardioxopiperazine A + dimethylallyl diphosphate = variecolorin L + diphosphate</text>
        <dbReference type="Rhea" id="RHEA:73787"/>
        <dbReference type="ChEBI" id="CHEBI:33019"/>
        <dbReference type="ChEBI" id="CHEBI:57623"/>
        <dbReference type="ChEBI" id="CHEBI:193007"/>
        <dbReference type="ChEBI" id="CHEBI:193008"/>
    </reaction>
    <physiologicalReaction direction="left-to-right" evidence="3 4">
        <dbReference type="Rhea" id="RHEA:73788"/>
    </physiologicalReaction>
</comment>
<comment type="catalytic activity">
    <reaction evidence="3 4">
        <text>neoechinulin A + dimethylallyl diphosphate = variecolorin G + diphosphate</text>
        <dbReference type="Rhea" id="RHEA:73791"/>
        <dbReference type="ChEBI" id="CHEBI:33019"/>
        <dbReference type="ChEBI" id="CHEBI:57623"/>
        <dbReference type="ChEBI" id="CHEBI:193004"/>
        <dbReference type="ChEBI" id="CHEBI:193009"/>
    </reaction>
    <physiologicalReaction direction="left-to-right" evidence="3 4">
        <dbReference type="Rhea" id="RHEA:73792"/>
    </physiologicalReaction>
</comment>
<comment type="catalytic activity">
    <reaction evidence="3 4">
        <text>neoechinulin A + dimethylallyl diphosphate = isoechinulin A + diphosphate</text>
        <dbReference type="Rhea" id="RHEA:73795"/>
        <dbReference type="ChEBI" id="CHEBI:33019"/>
        <dbReference type="ChEBI" id="CHEBI:57623"/>
        <dbReference type="ChEBI" id="CHEBI:193004"/>
        <dbReference type="ChEBI" id="CHEBI:193010"/>
    </reaction>
    <physiologicalReaction direction="left-to-right" evidence="3 4">
        <dbReference type="Rhea" id="RHEA:73796"/>
    </physiologicalReaction>
</comment>
<comment type="catalytic activity">
    <reaction evidence="3 4">
        <text>isoechinulin A + dimethylallyl diphosphate = dehydroechinulin + diphosphate</text>
        <dbReference type="Rhea" id="RHEA:73799"/>
        <dbReference type="ChEBI" id="CHEBI:33019"/>
        <dbReference type="ChEBI" id="CHEBI:57623"/>
        <dbReference type="ChEBI" id="CHEBI:193010"/>
        <dbReference type="ChEBI" id="CHEBI:193011"/>
    </reaction>
    <physiologicalReaction direction="left-to-right" evidence="3 4">
        <dbReference type="Rhea" id="RHEA:73800"/>
    </physiologicalReaction>
</comment>
<comment type="catalytic activity">
    <reaction evidence="3 4">
        <text>neoechinulin B + dimethylallyl diphosphate = isoechinulin B + diphosphate</text>
        <dbReference type="Rhea" id="RHEA:73803"/>
        <dbReference type="ChEBI" id="CHEBI:33019"/>
        <dbReference type="ChEBI" id="CHEBI:57623"/>
        <dbReference type="ChEBI" id="CHEBI:193005"/>
        <dbReference type="ChEBI" id="CHEBI:193026"/>
    </reaction>
    <physiologicalReaction direction="left-to-right" evidence="3 4">
        <dbReference type="Rhea" id="RHEA:73804"/>
    </physiologicalReaction>
</comment>
<comment type="biophysicochemical properties">
    <kinetics>
        <KM evidence="3">0.03 mM for preechinulin</KM>
        <KM evidence="3">0.1 mM for dimethylallyl diphosphate (DMAPP)</KM>
        <Vmax evidence="4">356.0 nmol/min/mg enzyme towards preechinulin</Vmax>
    </kinetics>
</comment>
<comment type="pathway">
    <text evidence="3 4">Secondary metabolite biosynthesis.</text>
</comment>
<comment type="pathway">
    <text evidence="3 4">Alkaloid biosynthesis.</text>
</comment>
<comment type="similarity">
    <text evidence="6">Belongs to the tryptophan dimethylallyltransferase family.</text>
</comment>
<comment type="sequence caution" evidence="6">
    <conflict type="erroneous initiation">
        <sequence resource="EMBL-CDS" id="EYE98746"/>
    </conflict>
    <text>Extended N-terminus.</text>
</comment>
<organism>
    <name type="scientific">Aspergillus ruber (strain CBS 135680)</name>
    <dbReference type="NCBI Taxonomy" id="1388766"/>
    <lineage>
        <taxon>Eukaryota</taxon>
        <taxon>Fungi</taxon>
        <taxon>Dikarya</taxon>
        <taxon>Ascomycota</taxon>
        <taxon>Pezizomycotina</taxon>
        <taxon>Eurotiomycetes</taxon>
        <taxon>Eurotiomycetidae</taxon>
        <taxon>Eurotiales</taxon>
        <taxon>Aspergillaceae</taxon>
        <taxon>Aspergillus</taxon>
        <taxon>Aspergillus subgen. Aspergillus</taxon>
    </lineage>
</organism>
<gene>
    <name evidence="5" type="primary">echPT2</name>
    <name type="ORF">EURHEDRAFT_448141</name>
</gene>
<name>ECPT2_ASPRC</name>
<keyword id="KW-0637">Prenyltransferase</keyword>
<keyword id="KW-1185">Reference proteome</keyword>
<keyword id="KW-0808">Transferase</keyword>
<evidence type="ECO:0000250" key="1">
    <source>
        <dbReference type="UniProtKB" id="A0A1E3B0T2"/>
    </source>
</evidence>
<evidence type="ECO:0000250" key="2">
    <source>
        <dbReference type="UniProtKB" id="Q50EL0"/>
    </source>
</evidence>
<evidence type="ECO:0000269" key="3">
    <source>
    </source>
</evidence>
<evidence type="ECO:0000269" key="4">
    <source>
    </source>
</evidence>
<evidence type="ECO:0000303" key="5">
    <source>
    </source>
</evidence>
<evidence type="ECO:0000305" key="6"/>
<accession>A0A017SPL2</accession>